<evidence type="ECO:0000255" key="1">
    <source>
        <dbReference type="HAMAP-Rule" id="MF_00050"/>
    </source>
</evidence>
<protein>
    <recommendedName>
        <fullName evidence="1">Elongation factor Ts</fullName>
        <shortName evidence="1">EF-Ts</shortName>
    </recommendedName>
</protein>
<feature type="chain" id="PRO_1000116730" description="Elongation factor Ts">
    <location>
        <begin position="1"/>
        <end position="283"/>
    </location>
</feature>
<feature type="region of interest" description="Involved in Mg(2+) ion dislocation from EF-Tu" evidence="1">
    <location>
        <begin position="80"/>
        <end position="83"/>
    </location>
</feature>
<reference key="1">
    <citation type="journal article" date="2009" name="PLoS Genet.">
        <title>Organised genome dynamics in the Escherichia coli species results in highly diverse adaptive paths.</title>
        <authorList>
            <person name="Touchon M."/>
            <person name="Hoede C."/>
            <person name="Tenaillon O."/>
            <person name="Barbe V."/>
            <person name="Baeriswyl S."/>
            <person name="Bidet P."/>
            <person name="Bingen E."/>
            <person name="Bonacorsi S."/>
            <person name="Bouchier C."/>
            <person name="Bouvet O."/>
            <person name="Calteau A."/>
            <person name="Chiapello H."/>
            <person name="Clermont O."/>
            <person name="Cruveiller S."/>
            <person name="Danchin A."/>
            <person name="Diard M."/>
            <person name="Dossat C."/>
            <person name="Karoui M.E."/>
            <person name="Frapy E."/>
            <person name="Garry L."/>
            <person name="Ghigo J.M."/>
            <person name="Gilles A.M."/>
            <person name="Johnson J."/>
            <person name="Le Bouguenec C."/>
            <person name="Lescat M."/>
            <person name="Mangenot S."/>
            <person name="Martinez-Jehanne V."/>
            <person name="Matic I."/>
            <person name="Nassif X."/>
            <person name="Oztas S."/>
            <person name="Petit M.A."/>
            <person name="Pichon C."/>
            <person name="Rouy Z."/>
            <person name="Ruf C.S."/>
            <person name="Schneider D."/>
            <person name="Tourret J."/>
            <person name="Vacherie B."/>
            <person name="Vallenet D."/>
            <person name="Medigue C."/>
            <person name="Rocha E.P.C."/>
            <person name="Denamur E."/>
        </authorList>
    </citation>
    <scope>NUCLEOTIDE SEQUENCE [LARGE SCALE GENOMIC DNA]</scope>
    <source>
        <strain>IAI39 / ExPEC</strain>
    </source>
</reference>
<accession>B7NID1</accession>
<comment type="function">
    <text evidence="1">Associates with the EF-Tu.GDP complex and induces the exchange of GDP to GTP. It remains bound to the aminoacyl-tRNA.EF-Tu.GTP complex up to the GTP hydrolysis stage on the ribosome.</text>
</comment>
<comment type="subcellular location">
    <subcellularLocation>
        <location evidence="1">Cytoplasm</location>
    </subcellularLocation>
</comment>
<comment type="similarity">
    <text evidence="1">Belongs to the EF-Ts family.</text>
</comment>
<keyword id="KW-0963">Cytoplasm</keyword>
<keyword id="KW-0251">Elongation factor</keyword>
<keyword id="KW-0648">Protein biosynthesis</keyword>
<gene>
    <name evidence="1" type="primary">tsf</name>
    <name type="ordered locus">ECIAI39_0172</name>
</gene>
<dbReference type="EMBL" id="CU928164">
    <property type="protein sequence ID" value="CAR16312.1"/>
    <property type="molecule type" value="Genomic_DNA"/>
</dbReference>
<dbReference type="RefSeq" id="WP_000818114.1">
    <property type="nucleotide sequence ID" value="NC_011750.1"/>
</dbReference>
<dbReference type="RefSeq" id="YP_002406218.1">
    <property type="nucleotide sequence ID" value="NC_011750.1"/>
</dbReference>
<dbReference type="SMR" id="B7NID1"/>
<dbReference type="STRING" id="585057.ECIAI39_0172"/>
<dbReference type="GeneID" id="93777255"/>
<dbReference type="KEGG" id="ect:ECIAI39_0172"/>
<dbReference type="PATRIC" id="fig|585057.6.peg.185"/>
<dbReference type="HOGENOM" id="CLU_047155_0_2_6"/>
<dbReference type="Proteomes" id="UP000000749">
    <property type="component" value="Chromosome"/>
</dbReference>
<dbReference type="GO" id="GO:0005737">
    <property type="term" value="C:cytoplasm"/>
    <property type="evidence" value="ECO:0007669"/>
    <property type="project" value="UniProtKB-SubCell"/>
</dbReference>
<dbReference type="GO" id="GO:0003746">
    <property type="term" value="F:translation elongation factor activity"/>
    <property type="evidence" value="ECO:0007669"/>
    <property type="project" value="UniProtKB-UniRule"/>
</dbReference>
<dbReference type="CDD" id="cd14275">
    <property type="entry name" value="UBA_EF-Ts"/>
    <property type="match status" value="1"/>
</dbReference>
<dbReference type="FunFam" id="1.10.286.20:FF:000001">
    <property type="entry name" value="Elongation factor Ts"/>
    <property type="match status" value="1"/>
</dbReference>
<dbReference type="FunFam" id="1.10.8.10:FF:000001">
    <property type="entry name" value="Elongation factor Ts"/>
    <property type="match status" value="1"/>
</dbReference>
<dbReference type="FunFam" id="3.30.479.20:FF:000001">
    <property type="entry name" value="Elongation factor Ts"/>
    <property type="match status" value="1"/>
</dbReference>
<dbReference type="Gene3D" id="1.10.286.20">
    <property type="match status" value="1"/>
</dbReference>
<dbReference type="Gene3D" id="1.10.8.10">
    <property type="entry name" value="DNA helicase RuvA subunit, C-terminal domain"/>
    <property type="match status" value="1"/>
</dbReference>
<dbReference type="Gene3D" id="3.30.479.20">
    <property type="entry name" value="Elongation factor Ts, dimerisation domain"/>
    <property type="match status" value="2"/>
</dbReference>
<dbReference type="HAMAP" id="MF_00050">
    <property type="entry name" value="EF_Ts"/>
    <property type="match status" value="1"/>
</dbReference>
<dbReference type="InterPro" id="IPR036402">
    <property type="entry name" value="EF-Ts_dimer_sf"/>
</dbReference>
<dbReference type="InterPro" id="IPR001816">
    <property type="entry name" value="Transl_elong_EFTs/EF1B"/>
</dbReference>
<dbReference type="InterPro" id="IPR014039">
    <property type="entry name" value="Transl_elong_EFTs/EF1B_dimer"/>
</dbReference>
<dbReference type="InterPro" id="IPR018101">
    <property type="entry name" value="Transl_elong_Ts_CS"/>
</dbReference>
<dbReference type="InterPro" id="IPR009060">
    <property type="entry name" value="UBA-like_sf"/>
</dbReference>
<dbReference type="NCBIfam" id="TIGR00116">
    <property type="entry name" value="tsf"/>
    <property type="match status" value="1"/>
</dbReference>
<dbReference type="PANTHER" id="PTHR11741">
    <property type="entry name" value="ELONGATION FACTOR TS"/>
    <property type="match status" value="1"/>
</dbReference>
<dbReference type="PANTHER" id="PTHR11741:SF0">
    <property type="entry name" value="ELONGATION FACTOR TS, MITOCHONDRIAL"/>
    <property type="match status" value="1"/>
</dbReference>
<dbReference type="Pfam" id="PF00889">
    <property type="entry name" value="EF_TS"/>
    <property type="match status" value="1"/>
</dbReference>
<dbReference type="SUPFAM" id="SSF54713">
    <property type="entry name" value="Elongation factor Ts (EF-Ts), dimerisation domain"/>
    <property type="match status" value="2"/>
</dbReference>
<dbReference type="SUPFAM" id="SSF46934">
    <property type="entry name" value="UBA-like"/>
    <property type="match status" value="1"/>
</dbReference>
<dbReference type="PROSITE" id="PS01126">
    <property type="entry name" value="EF_TS_1"/>
    <property type="match status" value="1"/>
</dbReference>
<dbReference type="PROSITE" id="PS01127">
    <property type="entry name" value="EF_TS_2"/>
    <property type="match status" value="1"/>
</dbReference>
<sequence>MAEITASLVKELRERTGAGMMDCKKALTEANGDIELAIENMRKSGAIKAAKKAGNVAADGVIKTKIDGNYGIILEVNCQTDFVAKDAGFQAFADKVLDAAVAGKITDVEVLKAQFEEERVALVAKIGENINIRRVAALEGDVLGSYQHGARIGVLVAAKGADEELVKHIAMHVAASKPEFIKPEDVSAEVVEKEYQVQLDIAMQSGKPKEIAEKMVEGRMKKFTGEVSLTGQPFVMEPSKTVGQLLKEHNAEVTGFIRFEVGEGIEKVETDFAAEVAAMSKQS</sequence>
<name>EFTS_ECO7I</name>
<organism>
    <name type="scientific">Escherichia coli O7:K1 (strain IAI39 / ExPEC)</name>
    <dbReference type="NCBI Taxonomy" id="585057"/>
    <lineage>
        <taxon>Bacteria</taxon>
        <taxon>Pseudomonadati</taxon>
        <taxon>Pseudomonadota</taxon>
        <taxon>Gammaproteobacteria</taxon>
        <taxon>Enterobacterales</taxon>
        <taxon>Enterobacteriaceae</taxon>
        <taxon>Escherichia</taxon>
    </lineage>
</organism>
<proteinExistence type="inferred from homology"/>